<name>PLMS_SQUAC</name>
<dbReference type="SMR" id="P82542"/>
<dbReference type="GO" id="GO:0034707">
    <property type="term" value="C:chloride channel complex"/>
    <property type="evidence" value="ECO:0007669"/>
    <property type="project" value="UniProtKB-KW"/>
</dbReference>
<dbReference type="GO" id="GO:0005789">
    <property type="term" value="C:endoplasmic reticulum membrane"/>
    <property type="evidence" value="ECO:0007669"/>
    <property type="project" value="UniProtKB-SubCell"/>
</dbReference>
<dbReference type="GO" id="GO:0005254">
    <property type="term" value="F:chloride channel activity"/>
    <property type="evidence" value="ECO:0007669"/>
    <property type="project" value="UniProtKB-KW"/>
</dbReference>
<dbReference type="GO" id="GO:0099106">
    <property type="term" value="F:ion channel regulator activity"/>
    <property type="evidence" value="ECO:0007669"/>
    <property type="project" value="InterPro"/>
</dbReference>
<dbReference type="GO" id="GO:0043269">
    <property type="term" value="P:regulation of monoatomic ion transport"/>
    <property type="evidence" value="ECO:0007669"/>
    <property type="project" value="InterPro"/>
</dbReference>
<dbReference type="CDD" id="cd20328">
    <property type="entry name" value="FXYD3-like"/>
    <property type="match status" value="1"/>
</dbReference>
<dbReference type="Gene3D" id="1.20.5.780">
    <property type="entry name" value="Single helix bin"/>
    <property type="match status" value="1"/>
</dbReference>
<dbReference type="InterPro" id="IPR047297">
    <property type="entry name" value="FXYD_motif"/>
</dbReference>
<dbReference type="InterPro" id="IPR000272">
    <property type="entry name" value="Ion-transport_regulator_FXYD"/>
</dbReference>
<dbReference type="Pfam" id="PF02038">
    <property type="entry name" value="ATP1G1_PLM_MAT8"/>
    <property type="match status" value="1"/>
</dbReference>
<dbReference type="PROSITE" id="PS01310">
    <property type="entry name" value="FXYD"/>
    <property type="match status" value="1"/>
</dbReference>
<reference key="1">
    <citation type="journal article" date="2000" name="J. Biol. Chem.">
        <title>Identification of a phospholemman-like protein from shark rectal glands: evidence for indirect regulation of Na,K-ATPase by protein kinase C via a novel member of the FxYDY family.</title>
        <authorList>
            <person name="Mahmmoud Y.A."/>
            <person name="Vorum H."/>
            <person name="Cornelius F."/>
        </authorList>
    </citation>
    <scope>PROTEIN SEQUENCE</scope>
    <source>
        <tissue>Rectal gland</tissue>
    </source>
</reference>
<reference key="2">
    <citation type="submission" date="2001-12" db="UniProtKB">
        <authorList>
            <person name="Cornelius F."/>
            <person name="Mahmmoud Y.A."/>
            <person name="Cramb G."/>
        </authorList>
    </citation>
    <scope>SEQUENCE REVISION TO 19; 24 AND 26</scope>
</reference>
<reference key="3">
    <citation type="journal article" date="2001" name="Biochem. Biophys. Res. Commun.">
        <title>N-terminal sequences of small ion channels in rectal glands of sharks: a biochemical hallmark for classification and phylogeny?</title>
        <authorList>
            <person name="Schuurmans Stekhoven F.M.A.H."/>
            <person name="Flik G."/>
            <person name="Wendelaar Bonga S.E."/>
        </authorList>
    </citation>
    <scope>PROTEIN SEQUENCE OF 1-25</scope>
    <source>
        <tissue>Rectal gland</tissue>
    </source>
</reference>
<keyword id="KW-0868">Chloride</keyword>
<keyword id="KW-0869">Chloride channel</keyword>
<keyword id="KW-0903">Direct protein sequencing</keyword>
<keyword id="KW-0256">Endoplasmic reticulum</keyword>
<keyword id="KW-0407">Ion channel</keyword>
<keyword id="KW-0406">Ion transport</keyword>
<keyword id="KW-0472">Membrane</keyword>
<keyword id="KW-0492">Microsome</keyword>
<keyword id="KW-0597">Phosphoprotein</keyword>
<keyword id="KW-0812">Transmembrane</keyword>
<keyword id="KW-0813">Transport</keyword>
<sequence length="30" mass="3430">MDPAGPDNDERFTYDYYRLRVVGLIVAAVL</sequence>
<feature type="chain" id="PRO_0000148183" description="Phospholemman-like protein">
    <location>
        <begin position="1"/>
        <end position="30" status="greater than"/>
    </location>
</feature>
<feature type="non-terminal residue">
    <location>
        <position position="30"/>
    </location>
</feature>
<protein>
    <recommendedName>
        <fullName>Phospholemman-like protein</fullName>
    </recommendedName>
    <alternativeName>
        <fullName>PLMS</fullName>
    </alternativeName>
</protein>
<accession>P82542</accession>
<accession>P83008</accession>
<evidence type="ECO:0000250" key="1"/>
<evidence type="ECO:0000305" key="2"/>
<organism>
    <name type="scientific">Squalus acanthias</name>
    <name type="common">Spiny dogfish</name>
    <dbReference type="NCBI Taxonomy" id="7797"/>
    <lineage>
        <taxon>Eukaryota</taxon>
        <taxon>Metazoa</taxon>
        <taxon>Chordata</taxon>
        <taxon>Craniata</taxon>
        <taxon>Vertebrata</taxon>
        <taxon>Chondrichthyes</taxon>
        <taxon>Elasmobranchii</taxon>
        <taxon>Squalomorphii</taxon>
        <taxon>Squaliformes</taxon>
        <taxon>Squalidae</taxon>
        <taxon>Squalus</taxon>
    </lineage>
</organism>
<comment type="function">
    <text>Induces a hyperpolarization-activated chloride current when expressed in Xenopus oocytes. May have a functional role in muscle contraction.</text>
</comment>
<comment type="subcellular location">
    <subcellularLocation>
        <location>Microsome membrane</location>
        <topology>Single-pass type I membrane protein</topology>
    </subcellularLocation>
    <subcellularLocation>
        <location evidence="2">Endoplasmic reticulum membrane</location>
        <topology evidence="2">Single-pass type I membrane protein</topology>
    </subcellularLocation>
</comment>
<comment type="PTM">
    <text evidence="1">Phosphorylated by protein kinase a (PK-A) and protein kinase C (PK-C). Phosphorylated in response to insulin and adrenergic stimulation (By similarity).</text>
</comment>
<comment type="similarity">
    <text evidence="2">Belongs to the FXYD family.</text>
</comment>
<proteinExistence type="evidence at protein level"/>